<sequence>MSSDGYPAPIFRGRRRGVLLALSSPSGAGKTTLSKRLLSQNPDVVLSVSATTRKPRPGEVDGQDYHFISVDEFKKKIEDDEFFEWAEVFGRYYGTPKTPVMEAVEDGRDVVFDIDWQGAQALAAAAPDDAVRVFILPPSLALLEDRLRKRGQDTTEIIKDRMARAKDEISHWHEYDYVIVNDDFARALEKLNEILHAERLKRLRHPWLEEFVDAIMEQ</sequence>
<comment type="function">
    <text evidence="1">Essential for recycling GMP and indirectly, cGMP.</text>
</comment>
<comment type="catalytic activity">
    <reaction evidence="1">
        <text>GMP + ATP = GDP + ADP</text>
        <dbReference type="Rhea" id="RHEA:20780"/>
        <dbReference type="ChEBI" id="CHEBI:30616"/>
        <dbReference type="ChEBI" id="CHEBI:58115"/>
        <dbReference type="ChEBI" id="CHEBI:58189"/>
        <dbReference type="ChEBI" id="CHEBI:456216"/>
        <dbReference type="EC" id="2.7.4.8"/>
    </reaction>
</comment>
<comment type="subcellular location">
    <subcellularLocation>
        <location evidence="1">Cytoplasm</location>
    </subcellularLocation>
</comment>
<comment type="similarity">
    <text evidence="1">Belongs to the guanylate kinase family.</text>
</comment>
<evidence type="ECO:0000255" key="1">
    <source>
        <dbReference type="HAMAP-Rule" id="MF_00328"/>
    </source>
</evidence>
<protein>
    <recommendedName>
        <fullName evidence="1">Guanylate kinase</fullName>
        <ecNumber evidence="1">2.7.4.8</ecNumber>
    </recommendedName>
    <alternativeName>
        <fullName evidence="1">GMP kinase</fullName>
    </alternativeName>
</protein>
<name>KGUA_MARMM</name>
<proteinExistence type="inferred from homology"/>
<organism>
    <name type="scientific">Maricaulis maris (strain MCS10)</name>
    <name type="common">Caulobacter maris</name>
    <dbReference type="NCBI Taxonomy" id="394221"/>
    <lineage>
        <taxon>Bacteria</taxon>
        <taxon>Pseudomonadati</taxon>
        <taxon>Pseudomonadota</taxon>
        <taxon>Alphaproteobacteria</taxon>
        <taxon>Maricaulales</taxon>
        <taxon>Maricaulaceae</taxon>
        <taxon>Maricaulis</taxon>
    </lineage>
</organism>
<dbReference type="EC" id="2.7.4.8" evidence="1"/>
<dbReference type="EMBL" id="CP000449">
    <property type="protein sequence ID" value="ABI65513.1"/>
    <property type="molecule type" value="Genomic_DNA"/>
</dbReference>
<dbReference type="RefSeq" id="WP_011643160.1">
    <property type="nucleotide sequence ID" value="NC_008347.1"/>
</dbReference>
<dbReference type="SMR" id="Q0AQC4"/>
<dbReference type="STRING" id="394221.Mmar10_1220"/>
<dbReference type="KEGG" id="mmr:Mmar10_1220"/>
<dbReference type="eggNOG" id="COG0194">
    <property type="taxonomic scope" value="Bacteria"/>
</dbReference>
<dbReference type="HOGENOM" id="CLU_001715_1_0_5"/>
<dbReference type="OrthoDB" id="9808150at2"/>
<dbReference type="Proteomes" id="UP000001964">
    <property type="component" value="Chromosome"/>
</dbReference>
<dbReference type="GO" id="GO:0005829">
    <property type="term" value="C:cytosol"/>
    <property type="evidence" value="ECO:0007669"/>
    <property type="project" value="TreeGrafter"/>
</dbReference>
<dbReference type="GO" id="GO:0005524">
    <property type="term" value="F:ATP binding"/>
    <property type="evidence" value="ECO:0007669"/>
    <property type="project" value="UniProtKB-UniRule"/>
</dbReference>
<dbReference type="GO" id="GO:0004385">
    <property type="term" value="F:guanylate kinase activity"/>
    <property type="evidence" value="ECO:0007669"/>
    <property type="project" value="UniProtKB-UniRule"/>
</dbReference>
<dbReference type="CDD" id="cd00071">
    <property type="entry name" value="GMPK"/>
    <property type="match status" value="1"/>
</dbReference>
<dbReference type="FunFam" id="3.30.63.10:FF:000002">
    <property type="entry name" value="Guanylate kinase 1"/>
    <property type="match status" value="1"/>
</dbReference>
<dbReference type="Gene3D" id="3.30.63.10">
    <property type="entry name" value="Guanylate Kinase phosphate binding domain"/>
    <property type="match status" value="1"/>
</dbReference>
<dbReference type="Gene3D" id="3.40.50.300">
    <property type="entry name" value="P-loop containing nucleotide triphosphate hydrolases"/>
    <property type="match status" value="1"/>
</dbReference>
<dbReference type="HAMAP" id="MF_00328">
    <property type="entry name" value="Guanylate_kinase"/>
    <property type="match status" value="1"/>
</dbReference>
<dbReference type="InterPro" id="IPR008145">
    <property type="entry name" value="GK/Ca_channel_bsu"/>
</dbReference>
<dbReference type="InterPro" id="IPR008144">
    <property type="entry name" value="Guanylate_kin-like_dom"/>
</dbReference>
<dbReference type="InterPro" id="IPR017665">
    <property type="entry name" value="Guanylate_kinase"/>
</dbReference>
<dbReference type="InterPro" id="IPR020590">
    <property type="entry name" value="Guanylate_kinase_CS"/>
</dbReference>
<dbReference type="InterPro" id="IPR027417">
    <property type="entry name" value="P-loop_NTPase"/>
</dbReference>
<dbReference type="NCBIfam" id="TIGR03263">
    <property type="entry name" value="guanyl_kin"/>
    <property type="match status" value="1"/>
</dbReference>
<dbReference type="PANTHER" id="PTHR23117:SF13">
    <property type="entry name" value="GUANYLATE KINASE"/>
    <property type="match status" value="1"/>
</dbReference>
<dbReference type="PANTHER" id="PTHR23117">
    <property type="entry name" value="GUANYLATE KINASE-RELATED"/>
    <property type="match status" value="1"/>
</dbReference>
<dbReference type="Pfam" id="PF00625">
    <property type="entry name" value="Guanylate_kin"/>
    <property type="match status" value="1"/>
</dbReference>
<dbReference type="SMART" id="SM00072">
    <property type="entry name" value="GuKc"/>
    <property type="match status" value="1"/>
</dbReference>
<dbReference type="SUPFAM" id="SSF52540">
    <property type="entry name" value="P-loop containing nucleoside triphosphate hydrolases"/>
    <property type="match status" value="1"/>
</dbReference>
<dbReference type="PROSITE" id="PS00856">
    <property type="entry name" value="GUANYLATE_KINASE_1"/>
    <property type="match status" value="1"/>
</dbReference>
<dbReference type="PROSITE" id="PS50052">
    <property type="entry name" value="GUANYLATE_KINASE_2"/>
    <property type="match status" value="1"/>
</dbReference>
<gene>
    <name evidence="1" type="primary">gmk</name>
    <name type="ordered locus">Mmar10_1220</name>
</gene>
<feature type="chain" id="PRO_0000266345" description="Guanylate kinase">
    <location>
        <begin position="1"/>
        <end position="218"/>
    </location>
</feature>
<feature type="domain" description="Guanylate kinase-like" evidence="1">
    <location>
        <begin position="17"/>
        <end position="196"/>
    </location>
</feature>
<feature type="binding site" evidence="1">
    <location>
        <begin position="24"/>
        <end position="31"/>
    </location>
    <ligand>
        <name>ATP</name>
        <dbReference type="ChEBI" id="CHEBI:30616"/>
    </ligand>
</feature>
<keyword id="KW-0067">ATP-binding</keyword>
<keyword id="KW-0963">Cytoplasm</keyword>
<keyword id="KW-0418">Kinase</keyword>
<keyword id="KW-0547">Nucleotide-binding</keyword>
<keyword id="KW-1185">Reference proteome</keyword>
<keyword id="KW-0808">Transferase</keyword>
<accession>Q0AQC4</accession>
<reference key="1">
    <citation type="submission" date="2006-08" db="EMBL/GenBank/DDBJ databases">
        <title>Complete sequence of Maricaulis maris MCS10.</title>
        <authorList>
            <consortium name="US DOE Joint Genome Institute"/>
            <person name="Copeland A."/>
            <person name="Lucas S."/>
            <person name="Lapidus A."/>
            <person name="Barry K."/>
            <person name="Detter J.C."/>
            <person name="Glavina del Rio T."/>
            <person name="Hammon N."/>
            <person name="Israni S."/>
            <person name="Dalin E."/>
            <person name="Tice H."/>
            <person name="Pitluck S."/>
            <person name="Saunders E."/>
            <person name="Brettin T."/>
            <person name="Bruce D."/>
            <person name="Han C."/>
            <person name="Tapia R."/>
            <person name="Gilna P."/>
            <person name="Schmutz J."/>
            <person name="Larimer F."/>
            <person name="Land M."/>
            <person name="Hauser L."/>
            <person name="Kyrpides N."/>
            <person name="Mikhailova N."/>
            <person name="Viollier P."/>
            <person name="Stephens C."/>
            <person name="Richardson P."/>
        </authorList>
    </citation>
    <scope>NUCLEOTIDE SEQUENCE [LARGE SCALE GENOMIC DNA]</scope>
    <source>
        <strain>MCS10</strain>
    </source>
</reference>